<gene>
    <name evidence="1" type="primary">dddP</name>
    <name evidence="6" type="ordered locus">RD1_2566</name>
</gene>
<evidence type="ECO:0000250" key="1">
    <source>
        <dbReference type="UniProtKB" id="A3SK19"/>
    </source>
</evidence>
<evidence type="ECO:0000256" key="2">
    <source>
        <dbReference type="SAM" id="MobiDB-lite"/>
    </source>
</evidence>
<evidence type="ECO:0000269" key="3">
    <source>
    </source>
</evidence>
<evidence type="ECO:0000303" key="4">
    <source>
    </source>
</evidence>
<evidence type="ECO:0000305" key="5"/>
<evidence type="ECO:0000312" key="6">
    <source>
        <dbReference type="EMBL" id="ABG32123.1"/>
    </source>
</evidence>
<evidence type="ECO:0007744" key="7">
    <source>
        <dbReference type="PDB" id="4B28"/>
    </source>
</evidence>
<evidence type="ECO:0007829" key="8">
    <source>
        <dbReference type="PDB" id="4B28"/>
    </source>
</evidence>
<accession>Q166H0</accession>
<protein>
    <recommendedName>
        <fullName evidence="5">Dimethylsulfoniopropionate lyase DddP</fullName>
        <shortName>DMSP lyase</shortName>
        <shortName evidence="4">RdDddP</shortName>
        <ecNumber evidence="1">4.4.1.3</ecNumber>
    </recommendedName>
</protein>
<reference key="1">
    <citation type="journal article" date="2007" name="J. Bacteriol.">
        <title>The complete genome sequence of Roseobacter denitrificans reveals a mixotrophic rather than photosynthetic metabolism.</title>
        <authorList>
            <person name="Swingley W.D."/>
            <person name="Sadekar S."/>
            <person name="Mastrian S.D."/>
            <person name="Matthies H.J."/>
            <person name="Hao J."/>
            <person name="Ramos H."/>
            <person name="Acharya C.R."/>
            <person name="Conrad A.L."/>
            <person name="Taylor H.L."/>
            <person name="Dejesa L.C."/>
            <person name="Shah M.K."/>
            <person name="O'Huallachain M.E."/>
            <person name="Lince M.T."/>
            <person name="Blankenship R.E."/>
            <person name="Beatty J.T."/>
            <person name="Touchman J.W."/>
        </authorList>
    </citation>
    <scope>NUCLEOTIDE SEQUENCE [LARGE SCALE GENOMIC DNA]</scope>
    <source>
        <strain>ATCC 33942 / OCh 114</strain>
    </source>
</reference>
<reference evidence="7" key="2">
    <citation type="journal article" date="2014" name="PLoS ONE">
        <title>The structure of RdDddP from Roseobacter denitrificans reveals that DMSP lyases in the DddP-family are metalloenzymes.</title>
        <authorList>
            <person name="Hehemann J.H."/>
            <person name="Law A."/>
            <person name="Redecke L."/>
            <person name="Boraston A.B."/>
        </authorList>
    </citation>
    <scope>X-RAY CRYSTALLOGRAPHY (2.15 ANGSTROMS) IN COMPLEX WITH IRON</scope>
    <scope>SUBUNIT</scope>
    <scope>COFACTOR</scope>
</reference>
<organism>
    <name type="scientific">Roseobacter denitrificans (strain ATCC 33942 / OCh 114)</name>
    <name type="common">Erythrobacter sp. (strain OCh 114)</name>
    <name type="synonym">Roseobacter denitrificans</name>
    <dbReference type="NCBI Taxonomy" id="375451"/>
    <lineage>
        <taxon>Bacteria</taxon>
        <taxon>Pseudomonadati</taxon>
        <taxon>Pseudomonadota</taxon>
        <taxon>Alphaproteobacteria</taxon>
        <taxon>Rhodobacterales</taxon>
        <taxon>Roseobacteraceae</taxon>
        <taxon>Roseobacter</taxon>
    </lineage>
</organism>
<sequence>MNRHFNATRKIDPSRGATLGDGSPNDMNRVEIGPTQLAFAEWHTARLDLPDLAAMRRFRHRRLTDHVVARGYAGLLMFDPLNIRYATDSTNMQLWNTHNPFRATLLCADGYMVMWDYKNSPFLSEFNPLVREQRAGADLFYFDRGDKVDVAADVFANEVRILLRDHAPGLRRLAVDKVMLHGLRALQAQGFEIMDGEEVTEKARSVKGPDEIRAMRCASHACEVAVRKMEDFARSKVGDGVTCENDIWAILHSENVRRGGEWIETRLLASGPRSNPWFQECGPRVCQRNEIISFDTDLVGAYGICTDISRSWWIGDQKPRADMIYAMQHGVEHIRTNMEMLKPGVMIPELSANTHVLDAKFQKQKYGCLMHGVGLCDEWPLVAYPDHAVAGAYDYPLEPGMTLCVEALISEEGGDFSIKLEDQVLITEDGYENLTKYPFDPALMGVE</sequence>
<keyword id="KW-0002">3D-structure</keyword>
<keyword id="KW-0378">Hydrolase</keyword>
<keyword id="KW-0408">Iron</keyword>
<keyword id="KW-0456">Lyase</keyword>
<keyword id="KW-0479">Metal-binding</keyword>
<keyword id="KW-1185">Reference proteome</keyword>
<name>DDDP_ROSDO</name>
<feature type="chain" id="PRO_0000433897" description="Dimethylsulfoniopropionate lyase DddP">
    <location>
        <begin position="1"/>
        <end position="447"/>
    </location>
</feature>
<feature type="region of interest" description="Disordered" evidence="2">
    <location>
        <begin position="1"/>
        <end position="26"/>
    </location>
</feature>
<feature type="binding site" evidence="3 7">
    <location>
        <position position="295"/>
    </location>
    <ligand>
        <name>a divalent metal cation</name>
        <dbReference type="ChEBI" id="CHEBI:60240"/>
        <label>1</label>
    </ligand>
</feature>
<feature type="binding site" evidence="3 7">
    <location>
        <position position="297"/>
    </location>
    <ligand>
        <name>a divalent metal cation</name>
        <dbReference type="ChEBI" id="CHEBI:60240"/>
        <label>1</label>
    </ligand>
</feature>
<feature type="binding site" evidence="3 7">
    <location>
        <position position="307"/>
    </location>
    <ligand>
        <name>a divalent metal cation</name>
        <dbReference type="ChEBI" id="CHEBI:60240"/>
        <label>1</label>
    </ligand>
</feature>
<feature type="binding site" evidence="3 7">
    <location>
        <position position="307"/>
    </location>
    <ligand>
        <name>a divalent metal cation</name>
        <dbReference type="ChEBI" id="CHEBI:60240"/>
        <label>2</label>
    </ligand>
</feature>
<feature type="binding site" evidence="3 7">
    <location>
        <position position="371"/>
    </location>
    <ligand>
        <name>a divalent metal cation</name>
        <dbReference type="ChEBI" id="CHEBI:60240"/>
        <label>2</label>
    </ligand>
</feature>
<feature type="binding site" evidence="3 7">
    <location>
        <position position="406"/>
    </location>
    <ligand>
        <name>a divalent metal cation</name>
        <dbReference type="ChEBI" id="CHEBI:60240"/>
        <label>2</label>
    </ligand>
</feature>
<feature type="binding site" evidence="3 7">
    <location>
        <position position="421"/>
    </location>
    <ligand>
        <name>a divalent metal cation</name>
        <dbReference type="ChEBI" id="CHEBI:60240"/>
        <label>1</label>
    </ligand>
</feature>
<feature type="binding site" evidence="3 7">
    <location>
        <position position="421"/>
    </location>
    <ligand>
        <name>a divalent metal cation</name>
        <dbReference type="ChEBI" id="CHEBI:60240"/>
        <label>2</label>
    </ligand>
</feature>
<feature type="strand" evidence="8">
    <location>
        <begin position="13"/>
        <end position="18"/>
    </location>
</feature>
<feature type="strand" evidence="8">
    <location>
        <begin position="22"/>
        <end position="24"/>
    </location>
</feature>
<feature type="helix" evidence="8">
    <location>
        <begin position="36"/>
        <end position="44"/>
    </location>
</feature>
<feature type="helix" evidence="8">
    <location>
        <begin position="52"/>
        <end position="69"/>
    </location>
</feature>
<feature type="strand" evidence="8">
    <location>
        <begin position="73"/>
        <end position="77"/>
    </location>
</feature>
<feature type="helix" evidence="8">
    <location>
        <begin position="80"/>
        <end position="87"/>
    </location>
</feature>
<feature type="helix" evidence="8">
    <location>
        <begin position="93"/>
        <end position="98"/>
    </location>
</feature>
<feature type="strand" evidence="8">
    <location>
        <begin position="103"/>
        <end position="107"/>
    </location>
</feature>
<feature type="strand" evidence="8">
    <location>
        <begin position="112"/>
        <end position="115"/>
    </location>
</feature>
<feature type="helix" evidence="8">
    <location>
        <begin position="121"/>
        <end position="124"/>
    </location>
</feature>
<feature type="strand" evidence="8">
    <location>
        <begin position="132"/>
        <end position="134"/>
    </location>
</feature>
<feature type="helix" evidence="8">
    <location>
        <begin position="141"/>
        <end position="144"/>
    </location>
</feature>
<feature type="helix" evidence="8">
    <location>
        <begin position="145"/>
        <end position="147"/>
    </location>
</feature>
<feature type="helix" evidence="8">
    <location>
        <begin position="148"/>
        <end position="166"/>
    </location>
</feature>
<feature type="strand" evidence="8">
    <location>
        <begin position="172"/>
        <end position="177"/>
    </location>
</feature>
<feature type="helix" evidence="8">
    <location>
        <begin position="180"/>
        <end position="188"/>
    </location>
</feature>
<feature type="strand" evidence="8">
    <location>
        <begin position="192"/>
        <end position="195"/>
    </location>
</feature>
<feature type="helix" evidence="8">
    <location>
        <begin position="196"/>
        <end position="204"/>
    </location>
</feature>
<feature type="helix" evidence="8">
    <location>
        <begin position="209"/>
        <end position="236"/>
    </location>
</feature>
<feature type="helix" evidence="8">
    <location>
        <begin position="244"/>
        <end position="256"/>
    </location>
</feature>
<feature type="turn" evidence="8">
    <location>
        <begin position="257"/>
        <end position="259"/>
    </location>
</feature>
<feature type="strand" evidence="8">
    <location>
        <begin position="262"/>
        <end position="264"/>
    </location>
</feature>
<feature type="strand" evidence="8">
    <location>
        <begin position="268"/>
        <end position="270"/>
    </location>
</feature>
<feature type="helix" evidence="8">
    <location>
        <begin position="271"/>
        <end position="274"/>
    </location>
</feature>
<feature type="strand" evidence="8">
    <location>
        <begin position="288"/>
        <end position="295"/>
    </location>
</feature>
<feature type="helix" evidence="8">
    <location>
        <begin position="301"/>
        <end position="303"/>
    </location>
</feature>
<feature type="strand" evidence="8">
    <location>
        <begin position="309"/>
        <end position="317"/>
    </location>
</feature>
<feature type="helix" evidence="8">
    <location>
        <begin position="321"/>
        <end position="339"/>
    </location>
</feature>
<feature type="helix" evidence="8">
    <location>
        <begin position="347"/>
        <end position="352"/>
    </location>
</feature>
<feature type="helix" evidence="8">
    <location>
        <begin position="359"/>
        <end position="362"/>
    </location>
</feature>
<feature type="strand" evidence="8">
    <location>
        <begin position="369"/>
        <end position="382"/>
    </location>
</feature>
<feature type="turn" evidence="8">
    <location>
        <begin position="385"/>
        <end position="387"/>
    </location>
</feature>
<feature type="strand" evidence="8">
    <location>
        <begin position="402"/>
        <end position="410"/>
    </location>
</feature>
<feature type="strand" evidence="8">
    <location>
        <begin position="417"/>
        <end position="426"/>
    </location>
</feature>
<feature type="strand" evidence="8">
    <location>
        <begin position="428"/>
        <end position="433"/>
    </location>
</feature>
<feature type="helix" evidence="8">
    <location>
        <begin position="441"/>
        <end position="444"/>
    </location>
</feature>
<dbReference type="EC" id="4.4.1.3" evidence="1"/>
<dbReference type="EMBL" id="CP000362">
    <property type="protein sequence ID" value="ABG32123.1"/>
    <property type="molecule type" value="Genomic_DNA"/>
</dbReference>
<dbReference type="RefSeq" id="WP_011568740.1">
    <property type="nucleotide sequence ID" value="NC_008209.1"/>
</dbReference>
<dbReference type="PDB" id="4B28">
    <property type="method" value="X-ray"/>
    <property type="resolution" value="2.15 A"/>
    <property type="chains" value="A=1-447"/>
</dbReference>
<dbReference type="PDBsum" id="4B28"/>
<dbReference type="SMR" id="Q166H0"/>
<dbReference type="STRING" id="375451.RD1_2566"/>
<dbReference type="KEGG" id="rde:RD1_2566"/>
<dbReference type="eggNOG" id="COG0006">
    <property type="taxonomic scope" value="Bacteria"/>
</dbReference>
<dbReference type="HOGENOM" id="CLU_052604_0_0_5"/>
<dbReference type="OrthoDB" id="9803194at2"/>
<dbReference type="EvolutionaryTrace" id="Q166H0"/>
<dbReference type="Proteomes" id="UP000007029">
    <property type="component" value="Chromosome"/>
</dbReference>
<dbReference type="GO" id="GO:0047869">
    <property type="term" value="F:dimethylpropiothetin dethiomethylase activity"/>
    <property type="evidence" value="ECO:0007669"/>
    <property type="project" value="UniProtKB-EC"/>
</dbReference>
<dbReference type="GO" id="GO:0016787">
    <property type="term" value="F:hydrolase activity"/>
    <property type="evidence" value="ECO:0007669"/>
    <property type="project" value="UniProtKB-KW"/>
</dbReference>
<dbReference type="GO" id="GO:0046872">
    <property type="term" value="F:metal ion binding"/>
    <property type="evidence" value="ECO:0007669"/>
    <property type="project" value="UniProtKB-KW"/>
</dbReference>
<dbReference type="CDD" id="cd01066">
    <property type="entry name" value="APP_MetAP"/>
    <property type="match status" value="1"/>
</dbReference>
<dbReference type="Gene3D" id="3.90.230.10">
    <property type="entry name" value="Creatinase/methionine aminopeptidase superfamily"/>
    <property type="match status" value="1"/>
</dbReference>
<dbReference type="Gene3D" id="3.40.350.10">
    <property type="entry name" value="Creatinase/prolidase N-terminal domain"/>
    <property type="match status" value="1"/>
</dbReference>
<dbReference type="InterPro" id="IPR029149">
    <property type="entry name" value="Creatin/AminoP/Spt16_N"/>
</dbReference>
<dbReference type="InterPro" id="IPR036005">
    <property type="entry name" value="Creatinase/aminopeptidase-like"/>
</dbReference>
<dbReference type="InterPro" id="IPR050020">
    <property type="entry name" value="DddP"/>
</dbReference>
<dbReference type="InterPro" id="IPR000994">
    <property type="entry name" value="Pept_M24"/>
</dbReference>
<dbReference type="InterPro" id="IPR050659">
    <property type="entry name" value="Peptidase_M24B"/>
</dbReference>
<dbReference type="NCBIfam" id="NF043017">
    <property type="entry name" value="DimsulpropLyDddP"/>
    <property type="match status" value="1"/>
</dbReference>
<dbReference type="PANTHER" id="PTHR46112">
    <property type="entry name" value="AMINOPEPTIDASE"/>
    <property type="match status" value="1"/>
</dbReference>
<dbReference type="PANTHER" id="PTHR46112:SF2">
    <property type="entry name" value="XAA-PRO AMINOPEPTIDASE P-RELATED"/>
    <property type="match status" value="1"/>
</dbReference>
<dbReference type="Pfam" id="PF00557">
    <property type="entry name" value="Peptidase_M24"/>
    <property type="match status" value="1"/>
</dbReference>
<dbReference type="SUPFAM" id="SSF55920">
    <property type="entry name" value="Creatinase/aminopeptidase"/>
    <property type="match status" value="1"/>
</dbReference>
<comment type="function">
    <text evidence="1">Able to cleave dimethylsulfoniopropionate (DMSP), releasing dimethyl sulfide (DMS). DMS is the principal form by which sulfur is transported from oceans to the atmosphere. The real activity of the protein is however subject to debate and it is unclear whether it constitutes a real dimethylsulfoniopropionate lyase in vivo: the low activity with DMSP as substrate suggests that DMSP is not its native substrate.</text>
</comment>
<comment type="catalytic activity">
    <reaction evidence="1">
        <text>S,S-dimethyl-beta-propiothetin = acrylate + dimethyl sulfide + H(+)</text>
        <dbReference type="Rhea" id="RHEA:19965"/>
        <dbReference type="ChEBI" id="CHEBI:15378"/>
        <dbReference type="ChEBI" id="CHEBI:16457"/>
        <dbReference type="ChEBI" id="CHEBI:17437"/>
        <dbReference type="ChEBI" id="CHEBI:37080"/>
        <dbReference type="EC" id="4.4.1.3"/>
    </reaction>
</comment>
<comment type="cofactor">
    <cofactor evidence="3">
        <name>a divalent metal cation</name>
        <dbReference type="ChEBI" id="CHEBI:60240"/>
    </cofactor>
    <text evidence="3">Binds 2 divalent metal cation ions per subunit. Fe(2+), which is the most abundant metal ion found in the X-ray structure, may constitute the physiological cofactor.</text>
</comment>
<comment type="subunit">
    <text evidence="3">Homodimer.</text>
</comment>
<comment type="similarity">
    <text evidence="5">Belongs to the peptidase M24B family.</text>
</comment>
<proteinExistence type="evidence at protein level"/>